<accession>A4GDR8</accession>
<name>PROAX_OLEEU</name>
<comment type="function">
    <text evidence="1">Binds to actin and affects the structure of the cytoskeleton. At high concentrations, profilin prevents the polymerization of actin, whereas it enhances it at low concentrations (By similarity).</text>
</comment>
<comment type="subunit">
    <text evidence="1">Occurs in many kinds of cells as a complex with monomeric actin in a 1:1 ratio.</text>
</comment>
<comment type="subcellular location">
    <subcellularLocation>
        <location evidence="1">Cytoplasm</location>
        <location evidence="1">Cytoskeleton</location>
    </subcellularLocation>
</comment>
<comment type="PTM">
    <text evidence="1">Phosphorylated by MAP kinases.</text>
</comment>
<comment type="polymorphism">
    <text>Several isoforms of the allergen exist due to polymorphism.</text>
</comment>
<comment type="allergen">
    <text>Causes an allergic reaction in human.</text>
</comment>
<comment type="miscellaneous">
    <text evidence="3">The variability of the residues taking part of IgE-binding epitopes might be responsible of the difference in cross-reactivity among olive pollen cultivars, and between distantly related pollen species, leading to a variable range of allergy reactions among atopic patients.</text>
</comment>
<comment type="similarity">
    <text evidence="2">Belongs to the profilin family.</text>
</comment>
<organism>
    <name type="scientific">Olea europaea</name>
    <name type="common">Common olive</name>
    <dbReference type="NCBI Taxonomy" id="4146"/>
    <lineage>
        <taxon>Eukaryota</taxon>
        <taxon>Viridiplantae</taxon>
        <taxon>Streptophyta</taxon>
        <taxon>Embryophyta</taxon>
        <taxon>Tracheophyta</taxon>
        <taxon>Spermatophyta</taxon>
        <taxon>Magnoliopsida</taxon>
        <taxon>eudicotyledons</taxon>
        <taxon>Gunneridae</taxon>
        <taxon>Pentapetalae</taxon>
        <taxon>asterids</taxon>
        <taxon>lamiids</taxon>
        <taxon>Lamiales</taxon>
        <taxon>Oleaceae</taxon>
        <taxon>Oleeae</taxon>
        <taxon>Olea</taxon>
    </lineage>
</organism>
<feature type="initiator methionine" description="Removed" evidence="1">
    <location>
        <position position="1"/>
    </location>
</feature>
<feature type="chain" id="PRO_0000425015" description="Profilin-2">
    <location>
        <begin position="2"/>
        <end position="134"/>
    </location>
</feature>
<feature type="short sequence motif" description="Involved in PIP2 interaction">
    <location>
        <begin position="84"/>
        <end position="100"/>
    </location>
</feature>
<feature type="modified residue" description="Phosphothreonine" evidence="1">
    <location>
        <position position="114"/>
    </location>
</feature>
<feature type="disulfide bond" evidence="3">
    <location>
        <begin position="13"/>
        <end position="118"/>
    </location>
</feature>
<evidence type="ECO:0000250" key="1"/>
<evidence type="ECO:0000305" key="2"/>
<evidence type="ECO:0000305" key="3">
    <source>
    </source>
</evidence>
<sequence>MSWQTYVDDHLMCELEGNPGHHLSAAAILGQDGSVWAQSSAFPQFKPEEINGITTDFNEPGHLAPTGLHLGGAKYMVIAGEPGAVIRGKKGAGGITIKKTGQALVFGLYEEPVTPGQCNMVVERLGDYLLEQGL</sequence>
<reference key="1">
    <citation type="journal article" date="2012" name="PLoS ONE">
        <title>Characterization of profilin polymorphism in pollen with a focus on multifunctionality.</title>
        <authorList>
            <person name="Jimenez-Lopez J.C."/>
            <person name="Morales S."/>
            <person name="Castro A.J."/>
            <person name="Volkmann D."/>
            <person name="Rodriguez-Garcia M.I."/>
            <person name="Alche Jde D."/>
        </authorList>
    </citation>
    <scope>NUCLEOTIDE SEQUENCE [MRNA]</scope>
    <scope>POLYMORPHISM</scope>
    <source>
        <strain>cv. Blanqueta</strain>
    </source>
</reference>
<reference key="2">
    <citation type="journal article" date="2013" name="PLoS ONE">
        <title>Analysis of the effects of polymorphism on pollen profilin structural functionality and the generation of conformational, T- and B-cell epitopes.</title>
        <authorList>
            <person name="Jimenez-Lopez J.C."/>
            <person name="Rodriguez-Garcia M.I."/>
            <person name="Alche J.D."/>
        </authorList>
    </citation>
    <scope>3D-STRUCTURE MODELING</scope>
    <scope>DISULFIDE BOND</scope>
</reference>
<keyword id="KW-0009">Actin-binding</keyword>
<keyword id="KW-0020">Allergen</keyword>
<keyword id="KW-0963">Cytoplasm</keyword>
<keyword id="KW-0206">Cytoskeleton</keyword>
<keyword id="KW-1015">Disulfide bond</keyword>
<keyword id="KW-0597">Phosphoprotein</keyword>
<protein>
    <recommendedName>
        <fullName>Profilin-2</fullName>
    </recommendedName>
    <alternativeName>
        <fullName>Pollen allergen Ole e 2</fullName>
    </alternativeName>
    <allergenName>Ole e 2</allergenName>
</protein>
<proteinExistence type="evidence at protein level"/>
<dbReference type="EMBL" id="DQ138336">
    <property type="protein sequence ID" value="AAZ30414.1"/>
    <property type="molecule type" value="mRNA"/>
</dbReference>
<dbReference type="SMR" id="A4GDR8"/>
<dbReference type="Allergome" id="490">
    <property type="allergen name" value="Ole e 2"/>
</dbReference>
<dbReference type="GO" id="GO:0005938">
    <property type="term" value="C:cell cortex"/>
    <property type="evidence" value="ECO:0007669"/>
    <property type="project" value="TreeGrafter"/>
</dbReference>
<dbReference type="GO" id="GO:0005856">
    <property type="term" value="C:cytoskeleton"/>
    <property type="evidence" value="ECO:0007669"/>
    <property type="project" value="UniProtKB-SubCell"/>
</dbReference>
<dbReference type="GO" id="GO:0003785">
    <property type="term" value="F:actin monomer binding"/>
    <property type="evidence" value="ECO:0007669"/>
    <property type="project" value="TreeGrafter"/>
</dbReference>
<dbReference type="CDD" id="cd00148">
    <property type="entry name" value="PROF"/>
    <property type="match status" value="1"/>
</dbReference>
<dbReference type="FunFam" id="3.30.450.30:FF:000001">
    <property type="entry name" value="Profilin"/>
    <property type="match status" value="1"/>
</dbReference>
<dbReference type="Gene3D" id="3.30.450.30">
    <property type="entry name" value="Dynein light chain 2a, cytoplasmic"/>
    <property type="match status" value="1"/>
</dbReference>
<dbReference type="InterPro" id="IPR048278">
    <property type="entry name" value="PFN"/>
</dbReference>
<dbReference type="InterPro" id="IPR005455">
    <property type="entry name" value="PFN_euk"/>
</dbReference>
<dbReference type="InterPro" id="IPR036140">
    <property type="entry name" value="PFN_sf"/>
</dbReference>
<dbReference type="InterPro" id="IPR027310">
    <property type="entry name" value="Profilin_CS"/>
</dbReference>
<dbReference type="PANTHER" id="PTHR11604">
    <property type="entry name" value="PROFILIN"/>
    <property type="match status" value="1"/>
</dbReference>
<dbReference type="PANTHER" id="PTHR11604:SF25">
    <property type="entry name" value="PROFILIN-5"/>
    <property type="match status" value="1"/>
</dbReference>
<dbReference type="Pfam" id="PF00235">
    <property type="entry name" value="Profilin"/>
    <property type="match status" value="1"/>
</dbReference>
<dbReference type="PRINTS" id="PR00392">
    <property type="entry name" value="PROFILIN"/>
</dbReference>
<dbReference type="PRINTS" id="PR01640">
    <property type="entry name" value="PROFILINPLNT"/>
</dbReference>
<dbReference type="SMART" id="SM00392">
    <property type="entry name" value="PROF"/>
    <property type="match status" value="1"/>
</dbReference>
<dbReference type="SUPFAM" id="SSF55770">
    <property type="entry name" value="Profilin (actin-binding protein)"/>
    <property type="match status" value="1"/>
</dbReference>
<dbReference type="PROSITE" id="PS00414">
    <property type="entry name" value="PROFILIN"/>
    <property type="match status" value="1"/>
</dbReference>